<protein>
    <recommendedName>
        <fullName evidence="1">Phosphoribosyl-ATP pyrophosphatase</fullName>
        <shortName evidence="1">PRA-PH</shortName>
        <ecNumber evidence="1">3.6.1.31</ecNumber>
    </recommendedName>
</protein>
<feature type="chain" id="PRO_1000135302" description="Phosphoribosyl-ATP pyrophosphatase">
    <location>
        <begin position="1"/>
        <end position="87"/>
    </location>
</feature>
<dbReference type="EC" id="3.6.1.31" evidence="1"/>
<dbReference type="EMBL" id="CP000605">
    <property type="protein sequence ID" value="ACD97925.1"/>
    <property type="molecule type" value="Genomic_DNA"/>
</dbReference>
<dbReference type="RefSeq" id="WP_007054261.1">
    <property type="nucleotide sequence ID" value="NZ_AABM02000001.1"/>
</dbReference>
<dbReference type="SMR" id="B3DS06"/>
<dbReference type="KEGG" id="blj:BLD_0479"/>
<dbReference type="HOGENOM" id="CLU_123337_2_1_11"/>
<dbReference type="UniPathway" id="UPA00031">
    <property type="reaction ID" value="UER00007"/>
</dbReference>
<dbReference type="Proteomes" id="UP000002419">
    <property type="component" value="Chromosome"/>
</dbReference>
<dbReference type="GO" id="GO:0005737">
    <property type="term" value="C:cytoplasm"/>
    <property type="evidence" value="ECO:0007669"/>
    <property type="project" value="UniProtKB-SubCell"/>
</dbReference>
<dbReference type="GO" id="GO:0005524">
    <property type="term" value="F:ATP binding"/>
    <property type="evidence" value="ECO:0007669"/>
    <property type="project" value="UniProtKB-KW"/>
</dbReference>
<dbReference type="GO" id="GO:0004636">
    <property type="term" value="F:phosphoribosyl-ATP diphosphatase activity"/>
    <property type="evidence" value="ECO:0007669"/>
    <property type="project" value="UniProtKB-UniRule"/>
</dbReference>
<dbReference type="GO" id="GO:0000105">
    <property type="term" value="P:L-histidine biosynthetic process"/>
    <property type="evidence" value="ECO:0007669"/>
    <property type="project" value="UniProtKB-UniRule"/>
</dbReference>
<dbReference type="CDD" id="cd11547">
    <property type="entry name" value="NTP-PPase_HisE"/>
    <property type="match status" value="1"/>
</dbReference>
<dbReference type="Gene3D" id="1.10.287.1080">
    <property type="entry name" value="MazG-like"/>
    <property type="match status" value="1"/>
</dbReference>
<dbReference type="HAMAP" id="MF_01020">
    <property type="entry name" value="HisE"/>
    <property type="match status" value="1"/>
</dbReference>
<dbReference type="InterPro" id="IPR008179">
    <property type="entry name" value="HisE"/>
</dbReference>
<dbReference type="InterPro" id="IPR021130">
    <property type="entry name" value="PRib-ATP_PPHydrolase-like"/>
</dbReference>
<dbReference type="NCBIfam" id="TIGR03188">
    <property type="entry name" value="histidine_hisI"/>
    <property type="match status" value="1"/>
</dbReference>
<dbReference type="NCBIfam" id="NF001610">
    <property type="entry name" value="PRK00400.1-1"/>
    <property type="match status" value="1"/>
</dbReference>
<dbReference type="PANTHER" id="PTHR42945">
    <property type="entry name" value="HISTIDINE BIOSYNTHESIS BIFUNCTIONAL PROTEIN"/>
    <property type="match status" value="1"/>
</dbReference>
<dbReference type="PANTHER" id="PTHR42945:SF1">
    <property type="entry name" value="HISTIDINE BIOSYNTHESIS BIFUNCTIONAL PROTEIN HIS7"/>
    <property type="match status" value="1"/>
</dbReference>
<dbReference type="Pfam" id="PF01503">
    <property type="entry name" value="PRA-PH"/>
    <property type="match status" value="1"/>
</dbReference>
<dbReference type="SUPFAM" id="SSF101386">
    <property type="entry name" value="all-alpha NTP pyrophosphatases"/>
    <property type="match status" value="1"/>
</dbReference>
<proteinExistence type="inferred from homology"/>
<name>HIS2_BIFLD</name>
<keyword id="KW-0028">Amino-acid biosynthesis</keyword>
<keyword id="KW-0067">ATP-binding</keyword>
<keyword id="KW-0963">Cytoplasm</keyword>
<keyword id="KW-0368">Histidine biosynthesis</keyword>
<keyword id="KW-0378">Hydrolase</keyword>
<keyword id="KW-0547">Nucleotide-binding</keyword>
<gene>
    <name evidence="1" type="primary">hisE</name>
    <name type="ordered locus">BLD_0479</name>
</gene>
<comment type="catalytic activity">
    <reaction evidence="1">
        <text>1-(5-phospho-beta-D-ribosyl)-ATP + H2O = 1-(5-phospho-beta-D-ribosyl)-5'-AMP + diphosphate + H(+)</text>
        <dbReference type="Rhea" id="RHEA:22828"/>
        <dbReference type="ChEBI" id="CHEBI:15377"/>
        <dbReference type="ChEBI" id="CHEBI:15378"/>
        <dbReference type="ChEBI" id="CHEBI:33019"/>
        <dbReference type="ChEBI" id="CHEBI:59457"/>
        <dbReference type="ChEBI" id="CHEBI:73183"/>
        <dbReference type="EC" id="3.6.1.31"/>
    </reaction>
</comment>
<comment type="pathway">
    <text evidence="1">Amino-acid biosynthesis; L-histidine biosynthesis; L-histidine from 5-phospho-alpha-D-ribose 1-diphosphate: step 2/9.</text>
</comment>
<comment type="subcellular location">
    <subcellularLocation>
        <location evidence="1">Cytoplasm</location>
    </subcellularLocation>
</comment>
<comment type="similarity">
    <text evidence="1">Belongs to the PRA-PH family.</text>
</comment>
<reference key="1">
    <citation type="journal article" date="2008" name="BMC Genomics">
        <title>Comparative genomic analysis of the gut bacterium Bifidobacterium longum reveals loci susceptible to deletion during pure culture growth.</title>
        <authorList>
            <person name="Lee J.H."/>
            <person name="Karamychev V.N."/>
            <person name="Kozyavkin S.A."/>
            <person name="Mills D."/>
            <person name="Pavlov A.R."/>
            <person name="Pavlova N.V."/>
            <person name="Polouchine N.N."/>
            <person name="Richardson P.M."/>
            <person name="Shakhova V.V."/>
            <person name="Slesarev A.I."/>
            <person name="Weimer B."/>
            <person name="O'Sullivan D.J."/>
        </authorList>
    </citation>
    <scope>NUCLEOTIDE SEQUENCE [LARGE SCALE GENOMIC DNA]</scope>
    <source>
        <strain>DJO10A</strain>
    </source>
</reference>
<accession>B3DS06</accession>
<organism>
    <name type="scientific">Bifidobacterium longum (strain DJO10A)</name>
    <dbReference type="NCBI Taxonomy" id="205913"/>
    <lineage>
        <taxon>Bacteria</taxon>
        <taxon>Bacillati</taxon>
        <taxon>Actinomycetota</taxon>
        <taxon>Actinomycetes</taxon>
        <taxon>Bifidobacteriales</taxon>
        <taxon>Bifidobacteriaceae</taxon>
        <taxon>Bifidobacterium</taxon>
    </lineage>
</organism>
<sequence>MKTFESLFAELSEKAQTRPEGSLTVDELDKGTHFIGKKIIEEAGETWMAAEYEGADRTAEEMSQLLYHVQVMMIKHGLTLEDVYKHL</sequence>
<evidence type="ECO:0000255" key="1">
    <source>
        <dbReference type="HAMAP-Rule" id="MF_01020"/>
    </source>
</evidence>